<reference key="1">
    <citation type="submission" date="2008-10" db="EMBL/GenBank/DDBJ databases">
        <title>Genome sequence of Clostridium botulinum A2 Kyoto.</title>
        <authorList>
            <person name="Shrivastava S."/>
            <person name="Brinkac L.M."/>
            <person name="Brown J.L."/>
            <person name="Bruce D."/>
            <person name="Detter C.C."/>
            <person name="Johnson E.A."/>
            <person name="Munk C.A."/>
            <person name="Smith L.A."/>
            <person name="Smith T.J."/>
            <person name="Sutton G."/>
            <person name="Brettin T.S."/>
        </authorList>
    </citation>
    <scope>NUCLEOTIDE SEQUENCE [LARGE SCALE GENOMIC DNA]</scope>
    <source>
        <strain>Kyoto / Type A2</strain>
    </source>
</reference>
<keyword id="KW-0413">Isomerase</keyword>
<keyword id="KW-0460">Magnesium</keyword>
<keyword id="KW-0479">Metal-binding</keyword>
<keyword id="KW-0597">Phosphoprotein</keyword>
<name>GLMM_CLOBJ</name>
<organism>
    <name type="scientific">Clostridium botulinum (strain Kyoto / Type A2)</name>
    <dbReference type="NCBI Taxonomy" id="536232"/>
    <lineage>
        <taxon>Bacteria</taxon>
        <taxon>Bacillati</taxon>
        <taxon>Bacillota</taxon>
        <taxon>Clostridia</taxon>
        <taxon>Eubacteriales</taxon>
        <taxon>Clostridiaceae</taxon>
        <taxon>Clostridium</taxon>
    </lineage>
</organism>
<sequence length="449" mass="48893">MGRMFGTDGVRGIANKELTADLAYKLGKAGAFILTEGTHRPKILVGMDTRISGDMLESALVAGILSVGAEAICVGVIPTPAIAYLTRKYNADAGVVISASHNPVEYNGIKFFNKNGYKLSDELEDSIQALIRDDFKDVPVLTGENIGRKIEEDGEAIRDYIDFAKSTIKGDLKGLKVALDCANGASYITSVEAFKELGAEVHVINNKPDGININRNSGSTHPEDLMEYVVKNNCHMGLAFDGDADRCLAIDEKGNLINGDFILAICGKELKKQGRLKKNTIVVTVMSNLGLDIAMKKEEINTIKTKVGDRYVLEEMLKNDYAIGGEQSGHIIFSDYNTTGDGLVTALQLAHIVKESGKTFSELCSIMKELPQVLVNAKVSNDQKDIYLKDEEIKSEIDTITKNLDGSGRVLIRPSGTEPLVRVMLEGENQKEIDKLAHGLAKLIENKVK</sequence>
<dbReference type="EC" id="5.4.2.10" evidence="1"/>
<dbReference type="EMBL" id="CP001581">
    <property type="protein sequence ID" value="ACO86377.1"/>
    <property type="molecule type" value="Genomic_DNA"/>
</dbReference>
<dbReference type="RefSeq" id="WP_012705284.1">
    <property type="nucleotide sequence ID" value="NC_012563.1"/>
</dbReference>
<dbReference type="SMR" id="C1FMP0"/>
<dbReference type="KEGG" id="cby:CLM_3886"/>
<dbReference type="eggNOG" id="COG1109">
    <property type="taxonomic scope" value="Bacteria"/>
</dbReference>
<dbReference type="HOGENOM" id="CLU_016950_7_0_9"/>
<dbReference type="Proteomes" id="UP000001374">
    <property type="component" value="Chromosome"/>
</dbReference>
<dbReference type="GO" id="GO:0005829">
    <property type="term" value="C:cytosol"/>
    <property type="evidence" value="ECO:0007669"/>
    <property type="project" value="TreeGrafter"/>
</dbReference>
<dbReference type="GO" id="GO:0000287">
    <property type="term" value="F:magnesium ion binding"/>
    <property type="evidence" value="ECO:0007669"/>
    <property type="project" value="UniProtKB-UniRule"/>
</dbReference>
<dbReference type="GO" id="GO:0008966">
    <property type="term" value="F:phosphoglucosamine mutase activity"/>
    <property type="evidence" value="ECO:0007669"/>
    <property type="project" value="UniProtKB-UniRule"/>
</dbReference>
<dbReference type="GO" id="GO:0004615">
    <property type="term" value="F:phosphomannomutase activity"/>
    <property type="evidence" value="ECO:0007669"/>
    <property type="project" value="TreeGrafter"/>
</dbReference>
<dbReference type="GO" id="GO:0005975">
    <property type="term" value="P:carbohydrate metabolic process"/>
    <property type="evidence" value="ECO:0007669"/>
    <property type="project" value="InterPro"/>
</dbReference>
<dbReference type="GO" id="GO:0009252">
    <property type="term" value="P:peptidoglycan biosynthetic process"/>
    <property type="evidence" value="ECO:0007669"/>
    <property type="project" value="TreeGrafter"/>
</dbReference>
<dbReference type="GO" id="GO:0006048">
    <property type="term" value="P:UDP-N-acetylglucosamine biosynthetic process"/>
    <property type="evidence" value="ECO:0007669"/>
    <property type="project" value="TreeGrafter"/>
</dbReference>
<dbReference type="CDD" id="cd05802">
    <property type="entry name" value="GlmM"/>
    <property type="match status" value="1"/>
</dbReference>
<dbReference type="FunFam" id="3.30.310.50:FF:000001">
    <property type="entry name" value="Phosphoglucosamine mutase"/>
    <property type="match status" value="1"/>
</dbReference>
<dbReference type="FunFam" id="3.40.120.10:FF:000001">
    <property type="entry name" value="Phosphoglucosamine mutase"/>
    <property type="match status" value="1"/>
</dbReference>
<dbReference type="FunFam" id="3.40.120.10:FF:000002">
    <property type="entry name" value="Phosphoglucosamine mutase"/>
    <property type="match status" value="1"/>
</dbReference>
<dbReference type="Gene3D" id="3.40.120.10">
    <property type="entry name" value="Alpha-D-Glucose-1,6-Bisphosphate, subunit A, domain 3"/>
    <property type="match status" value="3"/>
</dbReference>
<dbReference type="Gene3D" id="3.30.310.50">
    <property type="entry name" value="Alpha-D-phosphohexomutase, C-terminal domain"/>
    <property type="match status" value="1"/>
</dbReference>
<dbReference type="HAMAP" id="MF_01554_B">
    <property type="entry name" value="GlmM_B"/>
    <property type="match status" value="1"/>
</dbReference>
<dbReference type="InterPro" id="IPR005844">
    <property type="entry name" value="A-D-PHexomutase_a/b/a-I"/>
</dbReference>
<dbReference type="InterPro" id="IPR016055">
    <property type="entry name" value="A-D-PHexomutase_a/b/a-I/II/III"/>
</dbReference>
<dbReference type="InterPro" id="IPR005845">
    <property type="entry name" value="A-D-PHexomutase_a/b/a-II"/>
</dbReference>
<dbReference type="InterPro" id="IPR005846">
    <property type="entry name" value="A-D-PHexomutase_a/b/a-III"/>
</dbReference>
<dbReference type="InterPro" id="IPR005843">
    <property type="entry name" value="A-D-PHexomutase_C"/>
</dbReference>
<dbReference type="InterPro" id="IPR036900">
    <property type="entry name" value="A-D-PHexomutase_C_sf"/>
</dbReference>
<dbReference type="InterPro" id="IPR016066">
    <property type="entry name" value="A-D-PHexomutase_CS"/>
</dbReference>
<dbReference type="InterPro" id="IPR005841">
    <property type="entry name" value="Alpha-D-phosphohexomutase_SF"/>
</dbReference>
<dbReference type="InterPro" id="IPR006352">
    <property type="entry name" value="GlmM_bact"/>
</dbReference>
<dbReference type="InterPro" id="IPR050060">
    <property type="entry name" value="Phosphoglucosamine_mutase"/>
</dbReference>
<dbReference type="NCBIfam" id="TIGR01455">
    <property type="entry name" value="glmM"/>
    <property type="match status" value="1"/>
</dbReference>
<dbReference type="NCBIfam" id="NF008139">
    <property type="entry name" value="PRK10887.1"/>
    <property type="match status" value="1"/>
</dbReference>
<dbReference type="PANTHER" id="PTHR42946:SF1">
    <property type="entry name" value="PHOSPHOGLUCOMUTASE (ALPHA-D-GLUCOSE-1,6-BISPHOSPHATE-DEPENDENT)"/>
    <property type="match status" value="1"/>
</dbReference>
<dbReference type="PANTHER" id="PTHR42946">
    <property type="entry name" value="PHOSPHOHEXOSE MUTASE"/>
    <property type="match status" value="1"/>
</dbReference>
<dbReference type="Pfam" id="PF02878">
    <property type="entry name" value="PGM_PMM_I"/>
    <property type="match status" value="1"/>
</dbReference>
<dbReference type="Pfam" id="PF02879">
    <property type="entry name" value="PGM_PMM_II"/>
    <property type="match status" value="1"/>
</dbReference>
<dbReference type="Pfam" id="PF02880">
    <property type="entry name" value="PGM_PMM_III"/>
    <property type="match status" value="1"/>
</dbReference>
<dbReference type="Pfam" id="PF00408">
    <property type="entry name" value="PGM_PMM_IV"/>
    <property type="match status" value="1"/>
</dbReference>
<dbReference type="PRINTS" id="PR00509">
    <property type="entry name" value="PGMPMM"/>
</dbReference>
<dbReference type="SUPFAM" id="SSF55957">
    <property type="entry name" value="Phosphoglucomutase, C-terminal domain"/>
    <property type="match status" value="1"/>
</dbReference>
<dbReference type="SUPFAM" id="SSF53738">
    <property type="entry name" value="Phosphoglucomutase, first 3 domains"/>
    <property type="match status" value="3"/>
</dbReference>
<dbReference type="PROSITE" id="PS00710">
    <property type="entry name" value="PGM_PMM"/>
    <property type="match status" value="1"/>
</dbReference>
<protein>
    <recommendedName>
        <fullName evidence="1">Phosphoglucosamine mutase</fullName>
        <ecNumber evidence="1">5.4.2.10</ecNumber>
    </recommendedName>
</protein>
<proteinExistence type="inferred from homology"/>
<evidence type="ECO:0000255" key="1">
    <source>
        <dbReference type="HAMAP-Rule" id="MF_01554"/>
    </source>
</evidence>
<feature type="chain" id="PRO_1000185359" description="Phosphoglucosamine mutase">
    <location>
        <begin position="1"/>
        <end position="449"/>
    </location>
</feature>
<feature type="active site" description="Phosphoserine intermediate" evidence="1">
    <location>
        <position position="100"/>
    </location>
</feature>
<feature type="binding site" description="via phosphate group" evidence="1">
    <location>
        <position position="100"/>
    </location>
    <ligand>
        <name>Mg(2+)</name>
        <dbReference type="ChEBI" id="CHEBI:18420"/>
    </ligand>
</feature>
<feature type="binding site" evidence="1">
    <location>
        <position position="241"/>
    </location>
    <ligand>
        <name>Mg(2+)</name>
        <dbReference type="ChEBI" id="CHEBI:18420"/>
    </ligand>
</feature>
<feature type="binding site" evidence="1">
    <location>
        <position position="243"/>
    </location>
    <ligand>
        <name>Mg(2+)</name>
        <dbReference type="ChEBI" id="CHEBI:18420"/>
    </ligand>
</feature>
<feature type="binding site" evidence="1">
    <location>
        <position position="245"/>
    </location>
    <ligand>
        <name>Mg(2+)</name>
        <dbReference type="ChEBI" id="CHEBI:18420"/>
    </ligand>
</feature>
<feature type="modified residue" description="Phosphoserine" evidence="1">
    <location>
        <position position="100"/>
    </location>
</feature>
<comment type="function">
    <text evidence="1">Catalyzes the conversion of glucosamine-6-phosphate to glucosamine-1-phosphate.</text>
</comment>
<comment type="catalytic activity">
    <reaction evidence="1">
        <text>alpha-D-glucosamine 1-phosphate = D-glucosamine 6-phosphate</text>
        <dbReference type="Rhea" id="RHEA:23424"/>
        <dbReference type="ChEBI" id="CHEBI:58516"/>
        <dbReference type="ChEBI" id="CHEBI:58725"/>
        <dbReference type="EC" id="5.4.2.10"/>
    </reaction>
</comment>
<comment type="cofactor">
    <cofactor evidence="1">
        <name>Mg(2+)</name>
        <dbReference type="ChEBI" id="CHEBI:18420"/>
    </cofactor>
    <text evidence="1">Binds 1 Mg(2+) ion per subunit.</text>
</comment>
<comment type="PTM">
    <text evidence="1">Activated by phosphorylation.</text>
</comment>
<comment type="similarity">
    <text evidence="1">Belongs to the phosphohexose mutase family.</text>
</comment>
<accession>C1FMP0</accession>
<gene>
    <name evidence="1" type="primary">glmM</name>
    <name type="ordered locus">CLM_3886</name>
</gene>